<keyword id="KW-1015">Disulfide bond</keyword>
<keyword id="KW-0274">FAD</keyword>
<keyword id="KW-0285">Flavoprotein</keyword>
<keyword id="KW-0349">Heme</keyword>
<keyword id="KW-0408">Iron</keyword>
<keyword id="KW-0479">Metal-binding</keyword>
<keyword id="KW-0500">Molybdenum</keyword>
<keyword id="KW-0521">NADP</keyword>
<keyword id="KW-0534">Nitrate assimilation</keyword>
<keyword id="KW-0560">Oxidoreductase</keyword>
<name>NIA_FUSOX</name>
<reference key="1">
    <citation type="journal article" date="1993" name="Gene">
        <title>The nia gene of Fusarium oxysporum: isolation, sequence and development of a homologous transformation system.</title>
        <authorList>
            <person name="Diolez A."/>
            <person name="Langin T."/>
            <person name="Gerlinger C."/>
            <person name="Brygoo Y."/>
            <person name="Daboussi M.-J."/>
        </authorList>
    </citation>
    <scope>NUCLEOTIDE SEQUENCE [GENOMIC DNA]</scope>
    <source>
        <strain>FOM24</strain>
    </source>
</reference>
<accession>P39863</accession>
<protein>
    <recommendedName>
        <fullName>Nitrate reductase [NADPH]</fullName>
        <shortName>NR</shortName>
        <ecNumber>1.7.1.3</ecNumber>
    </recommendedName>
</protein>
<evidence type="ECO:0000250" key="1"/>
<evidence type="ECO:0000250" key="2">
    <source>
        <dbReference type="UniProtKB" id="A0A286R227"/>
    </source>
</evidence>
<evidence type="ECO:0000250" key="3">
    <source>
        <dbReference type="UniProtKB" id="P17571"/>
    </source>
</evidence>
<evidence type="ECO:0000250" key="4">
    <source>
        <dbReference type="UniProtKB" id="P49050"/>
    </source>
</evidence>
<evidence type="ECO:0000255" key="5"/>
<evidence type="ECO:0000255" key="6">
    <source>
        <dbReference type="PROSITE-ProRule" id="PRU00279"/>
    </source>
</evidence>
<evidence type="ECO:0000255" key="7">
    <source>
        <dbReference type="PROSITE-ProRule" id="PRU00716"/>
    </source>
</evidence>
<evidence type="ECO:0000256" key="8">
    <source>
        <dbReference type="SAM" id="MobiDB-lite"/>
    </source>
</evidence>
<evidence type="ECO:0000305" key="9"/>
<comment type="function">
    <text>Nitrate reductase is a key enzyme involved in the first step of nitrate assimilation in plants, fungi and bacteria.</text>
</comment>
<comment type="catalytic activity">
    <reaction>
        <text>nitrite + NADP(+) + H2O = nitrate + NADPH + H(+)</text>
        <dbReference type="Rhea" id="RHEA:19061"/>
        <dbReference type="ChEBI" id="CHEBI:15377"/>
        <dbReference type="ChEBI" id="CHEBI:15378"/>
        <dbReference type="ChEBI" id="CHEBI:16301"/>
        <dbReference type="ChEBI" id="CHEBI:17632"/>
        <dbReference type="ChEBI" id="CHEBI:57783"/>
        <dbReference type="ChEBI" id="CHEBI:58349"/>
        <dbReference type="EC" id="1.7.1.3"/>
    </reaction>
</comment>
<comment type="cofactor">
    <cofactor evidence="1">
        <name>FAD</name>
        <dbReference type="ChEBI" id="CHEBI:57692"/>
    </cofactor>
    <text evidence="1">Binds 1 FAD.</text>
</comment>
<comment type="cofactor">
    <cofactor evidence="1">
        <name>heme</name>
        <dbReference type="ChEBI" id="CHEBI:30413"/>
    </cofactor>
    <text evidence="1">Binds 1 heme group. The heme group is called cytochrome b-557.</text>
</comment>
<comment type="cofactor">
    <cofactor evidence="1">
        <name>Mo-molybdopterin</name>
        <dbReference type="ChEBI" id="CHEBI:71302"/>
    </cofactor>
    <text evidence="1">Binds 1 Mo-molybdopterin (Mo-MPT) cofactor per subunit.</text>
</comment>
<comment type="subunit">
    <text evidence="1">Homodimer.</text>
</comment>
<comment type="similarity">
    <text evidence="9">Belongs to the nitrate reductase family.</text>
</comment>
<gene>
    <name type="primary">NIA</name>
</gene>
<proteinExistence type="inferred from homology"/>
<sequence length="905" mass="101899">METSTTTTLLQQERIPENSEPISTHIHTHSLPPTPPGTAKPSRIGSFHDLQELSSVESPRLDHIKPYPLPPKFSPKSVLKEDLKTPDNFVERDPRLIRLTGVHPFNVEAPLSDLYDEGFLTSENLHYVRNHGHVPRCEDDDILDWEFEISGLVENPIKMNVRDLINDYQQLTYPVTFVCAGNRRKEQNIVRKTKGFSWGPAGLSTALWTGVAIGDLLSAAKPKRGARYVCFEGADKLPNGYYGTSIKLNWCMDPNRGVMVAHKMNGNPLPPDHGKPVRIVIPGQIGGRSIKWLKKITITQEPSDNWYHIYDNRVLPTMISPEESANLPEVWKDEKYAIYDLSTNSAICYPAHEEKVPFTDAPASYKVRGYAYSGGGRRITRVEVTLDKGKSWRLANIRYPEDDYRNAPEGDTLYGGRVDMWWRETSFCWCFWDLDIPLDELKSADDIMMRAMDESMNVQPRDMYWSVLGMMNNPWFRIVIHKEDHALRFEHPTHATLKIKGWMERVKEAGGDLTNGYWGEKAPGEVQEVVVKEPEKQICMTNPQINRKITIEELKAHSGEEEPWFVVKGEVYDGTPYLSGHPGGAASIFGAAGQDATEEFMAIHSENAKAMLPTYHIGTLDEESRAILSGDATKTNDDADREVFLQAKTWSKAILDKKTSISPDTKIFSFKLNHEAQKIGLPTGQHLMMRLRDPATREAIIRSYTPYSDGSDCGRLDILIKIYYDTPQRKGGVMTQALDALPIGHWVDFKGPTGKFVYHGNGLCTINEKERRVRRFIMVCGGSGITPIRQVLRAVIDNPKDTTPCLVFNGNRSVNDILCMEELEELEAANPSRCRVVNALSNPPPEWNGLKGFVNQALVPEYMDLPKASGEGDELLLVCGPPPMVKAVEASFLGMGFKSDDFVFF</sequence>
<dbReference type="EC" id="1.7.1.3"/>
<dbReference type="EMBL" id="Z22549">
    <property type="protein sequence ID" value="CAA80270.1"/>
    <property type="molecule type" value="Genomic_DNA"/>
</dbReference>
<dbReference type="PIR" id="JN0803">
    <property type="entry name" value="JN0803"/>
</dbReference>
<dbReference type="SMR" id="P39863"/>
<dbReference type="VEuPathDB" id="FungiDB:FOC1_g10006706"/>
<dbReference type="VEuPathDB" id="FungiDB:FOC4_g10006835"/>
<dbReference type="VEuPathDB" id="FungiDB:FOIG_06720"/>
<dbReference type="VEuPathDB" id="FungiDB:FOMG_03004"/>
<dbReference type="VEuPathDB" id="FungiDB:FOXG_04181"/>
<dbReference type="VEuPathDB" id="FungiDB:FOZG_02928"/>
<dbReference type="VEuPathDB" id="FungiDB:HZS61_014296"/>
<dbReference type="GO" id="GO:0071949">
    <property type="term" value="F:FAD binding"/>
    <property type="evidence" value="ECO:0000250"/>
    <property type="project" value="UniProtKB"/>
</dbReference>
<dbReference type="GO" id="GO:0020037">
    <property type="term" value="F:heme binding"/>
    <property type="evidence" value="ECO:0007669"/>
    <property type="project" value="InterPro"/>
</dbReference>
<dbReference type="GO" id="GO:0030151">
    <property type="term" value="F:molybdenum ion binding"/>
    <property type="evidence" value="ECO:0000250"/>
    <property type="project" value="UniProtKB"/>
</dbReference>
<dbReference type="GO" id="GO:0043546">
    <property type="term" value="F:molybdopterin cofactor binding"/>
    <property type="evidence" value="ECO:0007669"/>
    <property type="project" value="InterPro"/>
</dbReference>
<dbReference type="GO" id="GO:0050464">
    <property type="term" value="F:nitrate reductase (NADPH) activity"/>
    <property type="evidence" value="ECO:0007669"/>
    <property type="project" value="UniProtKB-EC"/>
</dbReference>
<dbReference type="GO" id="GO:0008482">
    <property type="term" value="F:sulfite oxidase activity"/>
    <property type="evidence" value="ECO:0007669"/>
    <property type="project" value="TreeGrafter"/>
</dbReference>
<dbReference type="GO" id="GO:0042128">
    <property type="term" value="P:nitrate assimilation"/>
    <property type="evidence" value="ECO:0007669"/>
    <property type="project" value="UniProtKB-KW"/>
</dbReference>
<dbReference type="GO" id="GO:0006809">
    <property type="term" value="P:nitric oxide biosynthetic process"/>
    <property type="evidence" value="ECO:0007669"/>
    <property type="project" value="InterPro"/>
</dbReference>
<dbReference type="GO" id="GO:0006790">
    <property type="term" value="P:sulfur compound metabolic process"/>
    <property type="evidence" value="ECO:0007669"/>
    <property type="project" value="TreeGrafter"/>
</dbReference>
<dbReference type="CDD" id="cd06183">
    <property type="entry name" value="cyt_b5_reduct_like"/>
    <property type="match status" value="1"/>
</dbReference>
<dbReference type="FunFam" id="2.60.40.650:FF:000001">
    <property type="entry name" value="Nitrate reductase"/>
    <property type="match status" value="1"/>
</dbReference>
<dbReference type="FunFam" id="3.10.120.10:FF:000016">
    <property type="entry name" value="Nitrate reductase"/>
    <property type="match status" value="1"/>
</dbReference>
<dbReference type="FunFam" id="3.90.420.10:FF:000005">
    <property type="entry name" value="Nitrate reductase"/>
    <property type="match status" value="1"/>
</dbReference>
<dbReference type="Gene3D" id="2.60.40.650">
    <property type="match status" value="1"/>
</dbReference>
<dbReference type="Gene3D" id="3.10.120.10">
    <property type="entry name" value="Cytochrome b5-like heme/steroid binding domain"/>
    <property type="match status" value="1"/>
</dbReference>
<dbReference type="Gene3D" id="3.40.50.80">
    <property type="entry name" value="Nucleotide-binding domain of ferredoxin-NADP reductase (FNR) module"/>
    <property type="match status" value="1"/>
</dbReference>
<dbReference type="Gene3D" id="3.90.420.10">
    <property type="entry name" value="Oxidoreductase, molybdopterin-binding domain"/>
    <property type="match status" value="1"/>
</dbReference>
<dbReference type="Gene3D" id="2.40.30.10">
    <property type="entry name" value="Translation factors"/>
    <property type="match status" value="1"/>
</dbReference>
<dbReference type="InterPro" id="IPR008333">
    <property type="entry name" value="Cbr1-like_FAD-bd_dom"/>
</dbReference>
<dbReference type="InterPro" id="IPR001199">
    <property type="entry name" value="Cyt_B5-like_heme/steroid-bd"/>
</dbReference>
<dbReference type="InterPro" id="IPR036400">
    <property type="entry name" value="Cyt_B5-like_heme/steroid_sf"/>
</dbReference>
<dbReference type="InterPro" id="IPR018506">
    <property type="entry name" value="Cyt_B5_heme-BS"/>
</dbReference>
<dbReference type="InterPro" id="IPR017927">
    <property type="entry name" value="FAD-bd_FR_type"/>
</dbReference>
<dbReference type="InterPro" id="IPR001709">
    <property type="entry name" value="Flavoprot_Pyr_Nucl_cyt_Rdtase"/>
</dbReference>
<dbReference type="InterPro" id="IPR039261">
    <property type="entry name" value="FNR_nucleotide-bd"/>
</dbReference>
<dbReference type="InterPro" id="IPR014756">
    <property type="entry name" value="Ig_E-set"/>
</dbReference>
<dbReference type="InterPro" id="IPR005066">
    <property type="entry name" value="MoCF_OxRdtse_dimer"/>
</dbReference>
<dbReference type="InterPro" id="IPR008335">
    <property type="entry name" value="Mopterin_OxRdtase_euk"/>
</dbReference>
<dbReference type="InterPro" id="IPR012137">
    <property type="entry name" value="Nitr_rd_NADH"/>
</dbReference>
<dbReference type="InterPro" id="IPR001433">
    <property type="entry name" value="OxRdtase_FAD/NAD-bd"/>
</dbReference>
<dbReference type="InterPro" id="IPR000572">
    <property type="entry name" value="OxRdtase_Mopterin-bd_dom"/>
</dbReference>
<dbReference type="InterPro" id="IPR036374">
    <property type="entry name" value="OxRdtase_Mopterin-bd_sf"/>
</dbReference>
<dbReference type="InterPro" id="IPR022407">
    <property type="entry name" value="OxRdtase_Mopterin_BS"/>
</dbReference>
<dbReference type="InterPro" id="IPR017938">
    <property type="entry name" value="Riboflavin_synthase-like_b-brl"/>
</dbReference>
<dbReference type="PANTHER" id="PTHR19372:SF7">
    <property type="entry name" value="SULFITE OXIDASE, MITOCHONDRIAL"/>
    <property type="match status" value="1"/>
</dbReference>
<dbReference type="PANTHER" id="PTHR19372">
    <property type="entry name" value="SULFITE REDUCTASE"/>
    <property type="match status" value="1"/>
</dbReference>
<dbReference type="Pfam" id="PF00173">
    <property type="entry name" value="Cyt-b5"/>
    <property type="match status" value="1"/>
</dbReference>
<dbReference type="Pfam" id="PF00970">
    <property type="entry name" value="FAD_binding_6"/>
    <property type="match status" value="1"/>
</dbReference>
<dbReference type="Pfam" id="PF03404">
    <property type="entry name" value="Mo-co_dimer"/>
    <property type="match status" value="1"/>
</dbReference>
<dbReference type="Pfam" id="PF00175">
    <property type="entry name" value="NAD_binding_1"/>
    <property type="match status" value="1"/>
</dbReference>
<dbReference type="Pfam" id="PF00174">
    <property type="entry name" value="Oxidored_molyb"/>
    <property type="match status" value="1"/>
</dbReference>
<dbReference type="PIRSF" id="PIRSF000233">
    <property type="entry name" value="Nitr_rd_NADH"/>
    <property type="match status" value="1"/>
</dbReference>
<dbReference type="PRINTS" id="PR00406">
    <property type="entry name" value="CYTB5RDTASE"/>
</dbReference>
<dbReference type="PRINTS" id="PR00363">
    <property type="entry name" value="CYTOCHROMEB5"/>
</dbReference>
<dbReference type="PRINTS" id="PR00407">
    <property type="entry name" value="EUMOPTERIN"/>
</dbReference>
<dbReference type="PRINTS" id="PR00371">
    <property type="entry name" value="FPNCR"/>
</dbReference>
<dbReference type="SMART" id="SM01117">
    <property type="entry name" value="Cyt-b5"/>
    <property type="match status" value="1"/>
</dbReference>
<dbReference type="SUPFAM" id="SSF55856">
    <property type="entry name" value="Cytochrome b5-like heme/steroid binding domain"/>
    <property type="match status" value="1"/>
</dbReference>
<dbReference type="SUPFAM" id="SSF81296">
    <property type="entry name" value="E set domains"/>
    <property type="match status" value="1"/>
</dbReference>
<dbReference type="SUPFAM" id="SSF52343">
    <property type="entry name" value="Ferredoxin reductase-like, C-terminal NADP-linked domain"/>
    <property type="match status" value="1"/>
</dbReference>
<dbReference type="SUPFAM" id="SSF56524">
    <property type="entry name" value="Oxidoreductase molybdopterin-binding domain"/>
    <property type="match status" value="1"/>
</dbReference>
<dbReference type="SUPFAM" id="SSF63380">
    <property type="entry name" value="Riboflavin synthase domain-like"/>
    <property type="match status" value="1"/>
</dbReference>
<dbReference type="PROSITE" id="PS00191">
    <property type="entry name" value="CYTOCHROME_B5_1"/>
    <property type="match status" value="1"/>
</dbReference>
<dbReference type="PROSITE" id="PS50255">
    <property type="entry name" value="CYTOCHROME_B5_2"/>
    <property type="match status" value="1"/>
</dbReference>
<dbReference type="PROSITE" id="PS51384">
    <property type="entry name" value="FAD_FR"/>
    <property type="match status" value="1"/>
</dbReference>
<dbReference type="PROSITE" id="PS00559">
    <property type="entry name" value="MOLYBDOPTERIN_EUK"/>
    <property type="match status" value="1"/>
</dbReference>
<organism>
    <name type="scientific">Fusarium oxysporum</name>
    <name type="common">Fusarium vascular wilt</name>
    <dbReference type="NCBI Taxonomy" id="5507"/>
    <lineage>
        <taxon>Eukaryota</taxon>
        <taxon>Fungi</taxon>
        <taxon>Dikarya</taxon>
        <taxon>Ascomycota</taxon>
        <taxon>Pezizomycotina</taxon>
        <taxon>Sordariomycetes</taxon>
        <taxon>Hypocreomycetidae</taxon>
        <taxon>Hypocreales</taxon>
        <taxon>Nectriaceae</taxon>
        <taxon>Fusarium</taxon>
        <taxon>Fusarium oxysporum species complex</taxon>
    </lineage>
</organism>
<feature type="chain" id="PRO_0000166043" description="Nitrate reductase [NADPH]">
    <location>
        <begin position="1"/>
        <end position="905"/>
    </location>
</feature>
<feature type="domain" description="Cytochrome b5 heme-binding" evidence="6">
    <location>
        <begin position="546"/>
        <end position="621"/>
    </location>
</feature>
<feature type="domain" description="FAD-binding FR-type" evidence="7">
    <location>
        <begin position="648"/>
        <end position="759"/>
    </location>
</feature>
<feature type="region of interest" description="Disordered" evidence="8">
    <location>
        <begin position="1"/>
        <end position="42"/>
    </location>
</feature>
<feature type="binding site" evidence="4">
    <location>
        <position position="179"/>
    </location>
    <ligand>
        <name>Mo-molybdopterin</name>
        <dbReference type="ChEBI" id="CHEBI:71302"/>
    </ligand>
    <ligandPart>
        <name>Mo</name>
        <dbReference type="ChEBI" id="CHEBI:28685"/>
    </ligandPart>
</feature>
<feature type="binding site" description="axial binding residue" evidence="6">
    <location>
        <position position="581"/>
    </location>
    <ligand>
        <name>heme</name>
        <dbReference type="ChEBI" id="CHEBI:30413"/>
    </ligand>
    <ligandPart>
        <name>Fe</name>
        <dbReference type="ChEBI" id="CHEBI:18248"/>
    </ligandPart>
</feature>
<feature type="binding site" description="axial binding residue" evidence="6">
    <location>
        <position position="604"/>
    </location>
    <ligand>
        <name>heme</name>
        <dbReference type="ChEBI" id="CHEBI:30413"/>
    </ligand>
    <ligandPart>
        <name>Fe</name>
        <dbReference type="ChEBI" id="CHEBI:18248"/>
    </ligandPart>
</feature>
<feature type="binding site" evidence="2">
    <location>
        <begin position="702"/>
        <end position="705"/>
    </location>
    <ligand>
        <name>FAD</name>
        <dbReference type="ChEBI" id="CHEBI:57692"/>
    </ligand>
</feature>
<feature type="binding site" evidence="2">
    <location>
        <begin position="719"/>
        <end position="723"/>
    </location>
    <ligand>
        <name>FAD</name>
        <dbReference type="ChEBI" id="CHEBI:57692"/>
    </ligand>
</feature>
<feature type="binding site" evidence="2">
    <location>
        <begin position="733"/>
        <end position="735"/>
    </location>
    <ligand>
        <name>FAD</name>
        <dbReference type="ChEBI" id="CHEBI:57692"/>
    </ligand>
</feature>
<feature type="binding site" evidence="3">
    <location>
        <position position="783"/>
    </location>
    <ligand>
        <name>FAD</name>
        <dbReference type="ChEBI" id="CHEBI:57692"/>
    </ligand>
</feature>
<feature type="binding site" evidence="2">
    <location>
        <position position="786"/>
    </location>
    <ligand>
        <name>FAD</name>
        <dbReference type="ChEBI" id="CHEBI:57692"/>
    </ligand>
</feature>
<feature type="binding site" evidence="1">
    <location>
        <begin position="875"/>
        <end position="884"/>
    </location>
    <ligand>
        <name>NADP(+)</name>
        <dbReference type="ChEBI" id="CHEBI:58349"/>
    </ligand>
</feature>
<feature type="disulfide bond" description="Interchain" evidence="5">
    <location>
        <position position="428"/>
    </location>
</feature>